<feature type="chain" id="PRO_0000166866" description="Malate synthase, glyoxysomal">
    <location>
        <begin position="1"/>
        <end position="561"/>
    </location>
</feature>
<feature type="short sequence motif" description="Microbody targeting signal" evidence="2">
    <location>
        <begin position="559"/>
        <end position="561"/>
    </location>
</feature>
<feature type="active site" description="Proton acceptor" evidence="1">
    <location>
        <position position="177"/>
    </location>
</feature>
<feature type="active site" description="Proton donor" evidence="1">
    <location>
        <position position="462"/>
    </location>
</feature>
<feature type="sequence conflict" description="In Ref. 2; CAA73793." evidence="3" ref="2">
    <original>Q</original>
    <variation>L</variation>
    <location>
        <position position="29"/>
    </location>
</feature>
<feature type="sequence conflict" description="In Ref. 2; CAA73793." evidence="3" ref="2">
    <original>K</original>
    <variation>I</variation>
    <location>
        <position position="163"/>
    </location>
</feature>
<feature type="sequence conflict" description="In Ref. 2; CAA73793." evidence="3" ref="2">
    <original>A</original>
    <variation>V</variation>
    <location>
        <position position="172"/>
    </location>
</feature>
<feature type="sequence conflict" description="In Ref. 2; CAA73793." evidence="3" ref="2">
    <original>F</original>
    <variation>W</variation>
    <location>
        <position position="175"/>
    </location>
</feature>
<protein>
    <recommendedName>
        <fullName>Malate synthase, glyoxysomal</fullName>
        <ecNumber>2.3.3.9</ecNumber>
    </recommendedName>
</protein>
<proteinExistence type="evidence at transcript level"/>
<keyword id="KW-0329">Glyoxylate bypass</keyword>
<keyword id="KW-0330">Glyoxysome</keyword>
<keyword id="KW-0576">Peroxisome</keyword>
<keyword id="KW-0808">Transferase</keyword>
<keyword id="KW-0816">Tricarboxylic acid cycle</keyword>
<name>MASY_BRANA</name>
<dbReference type="EC" id="2.3.3.9"/>
<dbReference type="EMBL" id="J04468">
    <property type="protein sequence ID" value="AAA32996.1"/>
    <property type="molecule type" value="mRNA"/>
</dbReference>
<dbReference type="EMBL" id="Y13357">
    <property type="protein sequence ID" value="CAA73793.1"/>
    <property type="molecule type" value="mRNA"/>
</dbReference>
<dbReference type="PIR" id="A31428">
    <property type="entry name" value="SYRPMA"/>
</dbReference>
<dbReference type="RefSeq" id="NP_001412515.1">
    <property type="nucleotide sequence ID" value="NM_001425586.1"/>
</dbReference>
<dbReference type="RefSeq" id="XP_013720273.1">
    <property type="nucleotide sequence ID" value="XM_013864819.1"/>
</dbReference>
<dbReference type="RefSeq" id="XP_013721514.1">
    <property type="nucleotide sequence ID" value="XM_013866060.1"/>
</dbReference>
<dbReference type="SMR" id="P13244"/>
<dbReference type="EnsemblPlants" id="CDY04901">
    <property type="protein sequence ID" value="CDY04901"/>
    <property type="gene ID" value="GSBRNA2T00119622001"/>
</dbReference>
<dbReference type="GeneID" id="106424075"/>
<dbReference type="Gramene" id="CDY04901">
    <property type="protein sequence ID" value="CDY04901"/>
    <property type="gene ID" value="GSBRNA2T00119622001"/>
</dbReference>
<dbReference type="KEGG" id="bna:106424075"/>
<dbReference type="OMA" id="WHLPERH"/>
<dbReference type="OrthoDB" id="4078635at2759"/>
<dbReference type="UniPathway" id="UPA00703">
    <property type="reaction ID" value="UER00720"/>
</dbReference>
<dbReference type="GO" id="GO:0009514">
    <property type="term" value="C:glyoxysome"/>
    <property type="evidence" value="ECO:0007669"/>
    <property type="project" value="UniProtKB-SubCell"/>
</dbReference>
<dbReference type="GO" id="GO:0004474">
    <property type="term" value="F:malate synthase activity"/>
    <property type="evidence" value="ECO:0007669"/>
    <property type="project" value="UniProtKB-EC"/>
</dbReference>
<dbReference type="GO" id="GO:0006097">
    <property type="term" value="P:glyoxylate cycle"/>
    <property type="evidence" value="ECO:0007669"/>
    <property type="project" value="UniProtKB-UniPathway"/>
</dbReference>
<dbReference type="GO" id="GO:0006099">
    <property type="term" value="P:tricarboxylic acid cycle"/>
    <property type="evidence" value="ECO:0007669"/>
    <property type="project" value="UniProtKB-KW"/>
</dbReference>
<dbReference type="CDD" id="cd00727">
    <property type="entry name" value="malate_synt_A"/>
    <property type="match status" value="1"/>
</dbReference>
<dbReference type="FunFam" id="1.20.1220.12:FF:000001">
    <property type="entry name" value="Malate synthase"/>
    <property type="match status" value="1"/>
</dbReference>
<dbReference type="FunFam" id="3.20.20.360:FF:000001">
    <property type="entry name" value="Malate synthase"/>
    <property type="match status" value="1"/>
</dbReference>
<dbReference type="Gene3D" id="3.20.20.360">
    <property type="entry name" value="Malate synthase, domain 3"/>
    <property type="match status" value="1"/>
</dbReference>
<dbReference type="Gene3D" id="1.20.1220.12">
    <property type="entry name" value="Malate synthase, domain III"/>
    <property type="match status" value="1"/>
</dbReference>
<dbReference type="InterPro" id="IPR044856">
    <property type="entry name" value="Malate_synth_C_sf"/>
</dbReference>
<dbReference type="InterPro" id="IPR011076">
    <property type="entry name" value="Malate_synth_sf"/>
</dbReference>
<dbReference type="InterPro" id="IPR006252">
    <property type="entry name" value="Malate_synthA"/>
</dbReference>
<dbReference type="InterPro" id="IPR019830">
    <property type="entry name" value="Malate_synthase_CS"/>
</dbReference>
<dbReference type="InterPro" id="IPR001465">
    <property type="entry name" value="Malate_synthase_TIM"/>
</dbReference>
<dbReference type="InterPro" id="IPR048355">
    <property type="entry name" value="MS_C"/>
</dbReference>
<dbReference type="InterPro" id="IPR048356">
    <property type="entry name" value="MS_N"/>
</dbReference>
<dbReference type="InterPro" id="IPR046363">
    <property type="entry name" value="MS_N_TIM-barrel_dom"/>
</dbReference>
<dbReference type="NCBIfam" id="TIGR01344">
    <property type="entry name" value="malate_syn_A"/>
    <property type="match status" value="1"/>
</dbReference>
<dbReference type="PANTHER" id="PTHR42902">
    <property type="entry name" value="MALATE SYNTHASE"/>
    <property type="match status" value="1"/>
</dbReference>
<dbReference type="PANTHER" id="PTHR42902:SF1">
    <property type="entry name" value="MALATE SYNTHASE 1-RELATED"/>
    <property type="match status" value="1"/>
</dbReference>
<dbReference type="Pfam" id="PF20659">
    <property type="entry name" value="MS_C"/>
    <property type="match status" value="1"/>
</dbReference>
<dbReference type="Pfam" id="PF20656">
    <property type="entry name" value="MS_N"/>
    <property type="match status" value="1"/>
</dbReference>
<dbReference type="Pfam" id="PF01274">
    <property type="entry name" value="MS_TIM-barrel"/>
    <property type="match status" value="1"/>
</dbReference>
<dbReference type="PIRSF" id="PIRSF001363">
    <property type="entry name" value="Malate_synth"/>
    <property type="match status" value="1"/>
</dbReference>
<dbReference type="SUPFAM" id="SSF51645">
    <property type="entry name" value="Malate synthase G"/>
    <property type="match status" value="1"/>
</dbReference>
<dbReference type="PROSITE" id="PS00510">
    <property type="entry name" value="MALATE_SYNTHASE"/>
    <property type="match status" value="1"/>
</dbReference>
<accession>P13244</accession>
<accession>O04911</accession>
<reference key="1">
    <citation type="journal article" date="1989" name="J. Biol. Chem.">
        <title>Deduced sequence of a malate synthase polypeptide encoded by a subclass of the gene family.</title>
        <authorList>
            <person name="Comai L."/>
            <person name="Baden C.S."/>
            <person name="Harada J.J."/>
        </authorList>
    </citation>
    <scope>NUCLEOTIDE SEQUENCE [MRNA]</scope>
</reference>
<reference key="2">
    <citation type="submission" date="1997-05" db="EMBL/GenBank/DDBJ databases">
        <authorList>
            <person name="Olesen C."/>
            <person name="Thomsen K.K."/>
            <person name="Svendsen I."/>
            <person name="Brandt A.B."/>
        </authorList>
    </citation>
    <scope>NUCLEOTIDE SEQUENCE [MRNA]</scope>
    <source>
        <strain>cv. Global</strain>
        <tissue>Cotyledon</tissue>
    </source>
</reference>
<sequence>MELETSVYRPNVAVYDSPDGVEVRGRYDQVFAKILTRDALGFVAELQREFRGHVRYAMECRREVKRRYNSGAVPGFDPSTKFIRDGEWVCASVPPAVADRRVEITGPVERKMIINALNSGAKVFMADFEDALSPSWENLMRGQVNLKDAVDGSITFNDKARNKVYKLNDQVAKLFVRPRGWHLPEAHILIDGEPATGCLVDFGLYFFHNYAKFRQTQGSGFGPFFYLPKMEHSREAKIWNSVFERAEKMAGIERGSIRATVLIETLPAVFQMNEILYELRDHSVGLNCGRWDYIFSYVKTFQAHPDRLLPDRVLVGMGQHFMRSYSDLLIRTCHKRGVHAMGGMAAQIPIRDDPKANEMALDLVKKDKLREVRAGHDGTWAAHPGLIPICMDAFSHMGNNPNQIKSMKRDDASAITEEDLLQIPRGVRTLEGLRLNTRVGIQYLAAWLTGSGSVPLYNLMEDAATAEISRVQNWQWIRYGVELDGDGLGVRVSKELFGRVVEEEMERIEKEVGKDKFKRGMYKEACKMFTKQCTAAELDDFLTLAVYDHIVAHYPINASRL</sequence>
<comment type="catalytic activity">
    <reaction>
        <text>glyoxylate + acetyl-CoA + H2O = (S)-malate + CoA + H(+)</text>
        <dbReference type="Rhea" id="RHEA:18181"/>
        <dbReference type="ChEBI" id="CHEBI:15377"/>
        <dbReference type="ChEBI" id="CHEBI:15378"/>
        <dbReference type="ChEBI" id="CHEBI:15589"/>
        <dbReference type="ChEBI" id="CHEBI:36655"/>
        <dbReference type="ChEBI" id="CHEBI:57287"/>
        <dbReference type="ChEBI" id="CHEBI:57288"/>
        <dbReference type="EC" id="2.3.3.9"/>
    </reaction>
</comment>
<comment type="pathway">
    <text>Carbohydrate metabolism; glyoxylate cycle; (S)-malate from isocitrate: step 2/2.</text>
</comment>
<comment type="subcellular location">
    <subcellularLocation>
        <location>Glyoxysome</location>
    </subcellularLocation>
</comment>
<comment type="similarity">
    <text evidence="3">Belongs to the malate synthase family.</text>
</comment>
<organism>
    <name type="scientific">Brassica napus</name>
    <name type="common">Rape</name>
    <dbReference type="NCBI Taxonomy" id="3708"/>
    <lineage>
        <taxon>Eukaryota</taxon>
        <taxon>Viridiplantae</taxon>
        <taxon>Streptophyta</taxon>
        <taxon>Embryophyta</taxon>
        <taxon>Tracheophyta</taxon>
        <taxon>Spermatophyta</taxon>
        <taxon>Magnoliopsida</taxon>
        <taxon>eudicotyledons</taxon>
        <taxon>Gunneridae</taxon>
        <taxon>Pentapetalae</taxon>
        <taxon>rosids</taxon>
        <taxon>malvids</taxon>
        <taxon>Brassicales</taxon>
        <taxon>Brassicaceae</taxon>
        <taxon>Brassiceae</taxon>
        <taxon>Brassica</taxon>
    </lineage>
</organism>
<evidence type="ECO:0000250" key="1"/>
<evidence type="ECO:0000255" key="2"/>
<evidence type="ECO:0000305" key="3"/>